<protein>
    <recommendedName>
        <fullName evidence="1">Inosine/xanthosine triphosphatase</fullName>
        <shortName evidence="1">ITPase/XTPase</shortName>
        <ecNumber evidence="1">3.6.1.73</ecNumber>
    </recommendedName>
    <alternativeName>
        <fullName evidence="1">Non-canonical purine NTP phosphatase</fullName>
    </alternativeName>
    <alternativeName>
        <fullName evidence="1">Non-standard purine NTP phosphatase</fullName>
    </alternativeName>
    <alternativeName>
        <fullName evidence="1">Nucleoside-triphosphate phosphatase</fullName>
        <shortName evidence="1">NTPase</shortName>
    </alternativeName>
</protein>
<organism>
    <name type="scientific">Salmonella newport (strain SL254)</name>
    <dbReference type="NCBI Taxonomy" id="423368"/>
    <lineage>
        <taxon>Bacteria</taxon>
        <taxon>Pseudomonadati</taxon>
        <taxon>Pseudomonadota</taxon>
        <taxon>Gammaproteobacteria</taxon>
        <taxon>Enterobacterales</taxon>
        <taxon>Enterobacteriaceae</taxon>
        <taxon>Salmonella</taxon>
    </lineage>
</organism>
<accession>B4T4I8</accession>
<comment type="function">
    <text evidence="1">Phosphatase that hydrolyzes non-canonical purine nucleotides such as XTP and ITP to their respective diphosphate derivatives. Probably excludes non-canonical purines from DNA/RNA precursor pool, thus preventing their incorporation into DNA/RNA and avoiding chromosomal lesions.</text>
</comment>
<comment type="catalytic activity">
    <reaction evidence="1">
        <text>XTP + H2O = XDP + phosphate + H(+)</text>
        <dbReference type="Rhea" id="RHEA:28406"/>
        <dbReference type="ChEBI" id="CHEBI:15377"/>
        <dbReference type="ChEBI" id="CHEBI:15378"/>
        <dbReference type="ChEBI" id="CHEBI:43474"/>
        <dbReference type="ChEBI" id="CHEBI:59884"/>
        <dbReference type="ChEBI" id="CHEBI:61314"/>
        <dbReference type="EC" id="3.6.1.73"/>
    </reaction>
</comment>
<comment type="catalytic activity">
    <reaction evidence="1">
        <text>ITP + H2O = IDP + phosphate + H(+)</text>
        <dbReference type="Rhea" id="RHEA:28330"/>
        <dbReference type="ChEBI" id="CHEBI:15377"/>
        <dbReference type="ChEBI" id="CHEBI:15378"/>
        <dbReference type="ChEBI" id="CHEBI:43474"/>
        <dbReference type="ChEBI" id="CHEBI:58280"/>
        <dbReference type="ChEBI" id="CHEBI:61402"/>
        <dbReference type="EC" id="3.6.1.73"/>
    </reaction>
</comment>
<comment type="cofactor">
    <cofactor evidence="1">
        <name>Mg(2+)</name>
        <dbReference type="ChEBI" id="CHEBI:18420"/>
    </cofactor>
    <cofactor evidence="1">
        <name>Mn(2+)</name>
        <dbReference type="ChEBI" id="CHEBI:29035"/>
    </cofactor>
    <text evidence="1">Binds 1 divalent metal cation per subunit; can use either Mg(2+) or Mn(2+).</text>
</comment>
<comment type="subunit">
    <text evidence="1">Homodimer.</text>
</comment>
<comment type="similarity">
    <text evidence="1">Belongs to the YjjX NTPase family.</text>
</comment>
<evidence type="ECO:0000255" key="1">
    <source>
        <dbReference type="HAMAP-Rule" id="MF_00648"/>
    </source>
</evidence>
<feature type="chain" id="PRO_1000130947" description="Inosine/xanthosine triphosphatase">
    <location>
        <begin position="1"/>
        <end position="171"/>
    </location>
</feature>
<feature type="binding site" evidence="1">
    <location>
        <begin position="8"/>
        <end position="13"/>
    </location>
    <ligand>
        <name>substrate</name>
    </ligand>
</feature>
<feature type="binding site" evidence="1">
    <location>
        <position position="38"/>
    </location>
    <ligand>
        <name>Mg(2+)</name>
        <dbReference type="ChEBI" id="CHEBI:18420"/>
    </ligand>
</feature>
<feature type="binding site" evidence="1">
    <location>
        <position position="68"/>
    </location>
    <ligand>
        <name>Mg(2+)</name>
        <dbReference type="ChEBI" id="CHEBI:18420"/>
    </ligand>
</feature>
<reference key="1">
    <citation type="journal article" date="2011" name="J. Bacteriol.">
        <title>Comparative genomics of 28 Salmonella enterica isolates: evidence for CRISPR-mediated adaptive sublineage evolution.</title>
        <authorList>
            <person name="Fricke W.F."/>
            <person name="Mammel M.K."/>
            <person name="McDermott P.F."/>
            <person name="Tartera C."/>
            <person name="White D.G."/>
            <person name="Leclerc J.E."/>
            <person name="Ravel J."/>
            <person name="Cebula T.A."/>
        </authorList>
    </citation>
    <scope>NUCLEOTIDE SEQUENCE [LARGE SCALE GENOMIC DNA]</scope>
    <source>
        <strain>SL254</strain>
    </source>
</reference>
<proteinExistence type="inferred from homology"/>
<dbReference type="EC" id="3.6.1.73" evidence="1"/>
<dbReference type="EMBL" id="CP001113">
    <property type="protein sequence ID" value="ACF63363.1"/>
    <property type="molecule type" value="Genomic_DNA"/>
</dbReference>
<dbReference type="RefSeq" id="WP_000554314.1">
    <property type="nucleotide sequence ID" value="NZ_CCMR01000003.1"/>
</dbReference>
<dbReference type="SMR" id="B4T4I8"/>
<dbReference type="KEGG" id="see:SNSL254_A4942"/>
<dbReference type="HOGENOM" id="CLU_087417_1_0_6"/>
<dbReference type="Proteomes" id="UP000008824">
    <property type="component" value="Chromosome"/>
</dbReference>
<dbReference type="GO" id="GO:0103023">
    <property type="term" value="F:ITPase activity"/>
    <property type="evidence" value="ECO:0007669"/>
    <property type="project" value="UniProtKB-EC"/>
</dbReference>
<dbReference type="GO" id="GO:0046872">
    <property type="term" value="F:metal ion binding"/>
    <property type="evidence" value="ECO:0007669"/>
    <property type="project" value="UniProtKB-KW"/>
</dbReference>
<dbReference type="GO" id="GO:0000166">
    <property type="term" value="F:nucleotide binding"/>
    <property type="evidence" value="ECO:0007669"/>
    <property type="project" value="UniProtKB-KW"/>
</dbReference>
<dbReference type="GO" id="GO:0017111">
    <property type="term" value="F:ribonucleoside triphosphate phosphatase activity"/>
    <property type="evidence" value="ECO:0000250"/>
    <property type="project" value="UniProtKB"/>
</dbReference>
<dbReference type="GO" id="GO:0009117">
    <property type="term" value="P:nucleotide metabolic process"/>
    <property type="evidence" value="ECO:0007669"/>
    <property type="project" value="UniProtKB-KW"/>
</dbReference>
<dbReference type="GO" id="GO:0006772">
    <property type="term" value="P:thiamine metabolic process"/>
    <property type="evidence" value="ECO:0007669"/>
    <property type="project" value="TreeGrafter"/>
</dbReference>
<dbReference type="FunFam" id="3.90.950.10:FF:000002">
    <property type="entry name" value="Inosine/xanthosine triphosphatase"/>
    <property type="match status" value="1"/>
</dbReference>
<dbReference type="Gene3D" id="3.90.950.10">
    <property type="match status" value="1"/>
</dbReference>
<dbReference type="HAMAP" id="MF_00648">
    <property type="entry name" value="Non_canon_purine_NTPase_YjjX"/>
    <property type="match status" value="1"/>
</dbReference>
<dbReference type="InterPro" id="IPR029001">
    <property type="entry name" value="ITPase-like_fam"/>
</dbReference>
<dbReference type="InterPro" id="IPR002786">
    <property type="entry name" value="Non_canon_purine_NTPase"/>
</dbReference>
<dbReference type="InterPro" id="IPR026533">
    <property type="entry name" value="NTPase/PRRC1"/>
</dbReference>
<dbReference type="InterPro" id="IPR050299">
    <property type="entry name" value="YjjX_NTPase"/>
</dbReference>
<dbReference type="NCBIfam" id="TIGR00258">
    <property type="entry name" value="inosine/xanthosine triphosphatase"/>
    <property type="match status" value="1"/>
</dbReference>
<dbReference type="NCBIfam" id="NF003459">
    <property type="entry name" value="PRK05074.1"/>
    <property type="match status" value="1"/>
</dbReference>
<dbReference type="PANTHER" id="PTHR34699">
    <property type="match status" value="1"/>
</dbReference>
<dbReference type="PANTHER" id="PTHR34699:SF2">
    <property type="entry name" value="NON-CANONICAL PURINE NTP PHOSPHATASE_PRRC1 DOMAIN-CONTAINING PROTEIN"/>
    <property type="match status" value="1"/>
</dbReference>
<dbReference type="Pfam" id="PF01931">
    <property type="entry name" value="NTPase_I-T"/>
    <property type="match status" value="1"/>
</dbReference>
<dbReference type="SUPFAM" id="SSF52972">
    <property type="entry name" value="ITPase-like"/>
    <property type="match status" value="1"/>
</dbReference>
<gene>
    <name type="primary">yjjX</name>
    <name type="ordered locus">SNSL254_A4942</name>
</gene>
<name>NCPP_SALNS</name>
<sequence>MHQVISATTNPAKIQAILQAFEEIFGEGSCHITPVAVESGVPEQPFGSEETRAGARNRVGNARRLHPQADFWVAIEAGIDDDATFSWVVIDNGVQRGEARSATLPLPAVILDRVRQGEALGPVMSHYTGIDEIGRKEGAIGVFTAGKLTRSSVYYQAVILALSPFHNAVYR</sequence>
<keyword id="KW-0378">Hydrolase</keyword>
<keyword id="KW-0460">Magnesium</keyword>
<keyword id="KW-0464">Manganese</keyword>
<keyword id="KW-0479">Metal-binding</keyword>
<keyword id="KW-0546">Nucleotide metabolism</keyword>
<keyword id="KW-0547">Nucleotide-binding</keyword>